<comment type="function">
    <text>Tachykinins are active peptides which excite neurons, evoke behavioral responses, are potent vasodilators and secretagogues, and contract (directly or indirectly) many smooth muscles.</text>
</comment>
<comment type="subcellular location">
    <subcellularLocation>
        <location>Secreted</location>
    </subcellularLocation>
</comment>
<comment type="tissue specificity">
    <text>Expressed by the skin glands.</text>
</comment>
<comment type="similarity">
    <text evidence="2">Belongs to the tachykinin family.</text>
</comment>
<name>TKNM_ODOMA</name>
<dbReference type="GO" id="GO:0005576">
    <property type="term" value="C:extracellular region"/>
    <property type="evidence" value="ECO:0007669"/>
    <property type="project" value="UniProtKB-SubCell"/>
</dbReference>
<dbReference type="GO" id="GO:0006952">
    <property type="term" value="P:defense response"/>
    <property type="evidence" value="ECO:0007669"/>
    <property type="project" value="UniProtKB-KW"/>
</dbReference>
<dbReference type="GO" id="GO:0007218">
    <property type="term" value="P:neuropeptide signaling pathway"/>
    <property type="evidence" value="ECO:0007669"/>
    <property type="project" value="UniProtKB-KW"/>
</dbReference>
<dbReference type="PROSITE" id="PS00267">
    <property type="entry name" value="TACHYKININ"/>
    <property type="match status" value="1"/>
</dbReference>
<evidence type="ECO:0000269" key="1">
    <source>
    </source>
</evidence>
<evidence type="ECO:0000305" key="2"/>
<proteinExistence type="evidence at protein level"/>
<accession>P40951</accession>
<organism>
    <name type="scientific">Odorrana margaretae</name>
    <name type="common">Chinese frog</name>
    <name type="synonym">Rana margaratae</name>
    <dbReference type="NCBI Taxonomy" id="121156"/>
    <lineage>
        <taxon>Eukaryota</taxon>
        <taxon>Metazoa</taxon>
        <taxon>Chordata</taxon>
        <taxon>Craniata</taxon>
        <taxon>Vertebrata</taxon>
        <taxon>Euteleostomi</taxon>
        <taxon>Amphibia</taxon>
        <taxon>Batrachia</taxon>
        <taxon>Anura</taxon>
        <taxon>Neobatrachia</taxon>
        <taxon>Ranoidea</taxon>
        <taxon>Ranidae</taxon>
        <taxon>Odorrana</taxon>
    </lineage>
</organism>
<reference key="1">
    <citation type="journal article" date="1989" name="Sci. China, Ser. B, Chem. Life Sci. Earth Sci.">
        <title>Isolation and structure of ranamargarin, a new tachykinin from the skin of Chinese frog Rana margaratae.</title>
        <authorList>
            <person name="Tang Y.Q."/>
            <person name="Tian S.H."/>
            <person name="Wu S.X."/>
            <person name="Hua J.C."/>
            <person name="Wu G.F."/>
            <person name="Zhao E.M."/>
            <person name="Lu Y.A."/>
            <person name="Zhu Y.Q."/>
            <person name="Zou G."/>
            <person name="Tsou K."/>
        </authorList>
    </citation>
    <scope>PROTEIN SEQUENCE</scope>
    <scope>AMIDATION AT MET-14</scope>
    <source>
        <tissue>Skin secretion</tissue>
    </source>
</reference>
<reference key="2">
    <citation type="journal article" date="1990" name="Sci. China, Ser. B, Chem. Life Sci. Earth Sci.">
        <title>Synthesis and biological activity of a new frog skin peptide, ranamargarin.</title>
        <authorList>
            <person name="Lu Y.A."/>
            <person name="Peng J.L."/>
            <person name="Zhu Y.Q."/>
            <person name="Wu S.X."/>
            <person name="Tang Y.Q."/>
            <person name="Tian S.H."/>
            <person name="Zou G."/>
        </authorList>
    </citation>
    <scope>SYNTHESIS</scope>
</reference>
<protein>
    <recommendedName>
        <fullName>Ranamargarin</fullName>
    </recommendedName>
</protein>
<sequence length="14" mass="1617">DDASDRAKKFYGLM</sequence>
<keyword id="KW-0027">Amidation</keyword>
<keyword id="KW-0878">Amphibian defense peptide</keyword>
<keyword id="KW-0903">Direct protein sequencing</keyword>
<keyword id="KW-0527">Neuropeptide</keyword>
<keyword id="KW-0964">Secreted</keyword>
<feature type="peptide" id="PRO_0000044409" description="Ranamargarin">
    <location>
        <begin position="1"/>
        <end position="14"/>
    </location>
</feature>
<feature type="modified residue" description="Methionine amide" evidence="1">
    <location>
        <position position="14"/>
    </location>
</feature>